<proteinExistence type="inferred from homology"/>
<accession>A7ZVW6</accession>
<name>NHAA_ECOHS</name>
<evidence type="ECO:0000255" key="1">
    <source>
        <dbReference type="HAMAP-Rule" id="MF_01844"/>
    </source>
</evidence>
<feature type="chain" id="PRO_0000334290" description="Na(+)/H(+) antiporter NhaA">
    <location>
        <begin position="1"/>
        <end position="388"/>
    </location>
</feature>
<feature type="topological domain" description="Cytoplasmic" evidence="1">
    <location>
        <begin position="1"/>
        <end position="11"/>
    </location>
</feature>
<feature type="transmembrane region" description="Helical; Name=1" evidence="1">
    <location>
        <begin position="12"/>
        <end position="31"/>
    </location>
</feature>
<feature type="topological domain" description="Periplasmic" evidence="1">
    <location>
        <begin position="32"/>
        <end position="58"/>
    </location>
</feature>
<feature type="transmembrane region" description="Helical; Name=2" evidence="1">
    <location>
        <begin position="59"/>
        <end position="80"/>
    </location>
</feature>
<feature type="topological domain" description="Cytoplasmic" evidence="1">
    <location>
        <begin position="81"/>
        <end position="96"/>
    </location>
</feature>
<feature type="transmembrane region" description="Helical; Name=3" evidence="1">
    <location>
        <begin position="97"/>
        <end position="116"/>
    </location>
</feature>
<feature type="topological domain" description="Periplasmic" evidence="1">
    <location>
        <begin position="117"/>
        <end position="122"/>
    </location>
</feature>
<feature type="transmembrane region" description="Helical; Name=4" evidence="1">
    <location>
        <begin position="123"/>
        <end position="130"/>
    </location>
</feature>
<feature type="topological domain" description="Cytoplasmic" evidence="1">
    <location>
        <begin position="131"/>
        <end position="154"/>
    </location>
</feature>
<feature type="transmembrane region" description="Helical; Name=5" evidence="1">
    <location>
        <begin position="155"/>
        <end position="176"/>
    </location>
</feature>
<feature type="topological domain" description="Periplasmic" evidence="1">
    <location>
        <begin position="177"/>
        <end position="180"/>
    </location>
</feature>
<feature type="transmembrane region" description="Helical; Name=6" evidence="1">
    <location>
        <begin position="181"/>
        <end position="200"/>
    </location>
</feature>
<feature type="topological domain" description="Cytoplasmic" evidence="1">
    <location>
        <begin position="201"/>
        <end position="204"/>
    </location>
</feature>
<feature type="transmembrane region" description="Helical; Name=7" evidence="1">
    <location>
        <begin position="205"/>
        <end position="222"/>
    </location>
</feature>
<feature type="topological domain" description="Periplasmic" evidence="1">
    <location>
        <position position="223"/>
    </location>
</feature>
<feature type="transmembrane region" description="Helical; Name=8" evidence="1">
    <location>
        <begin position="224"/>
        <end position="236"/>
    </location>
</feature>
<feature type="topological domain" description="Cytoplasmic" evidence="1">
    <location>
        <begin position="237"/>
        <end position="253"/>
    </location>
</feature>
<feature type="transmembrane region" description="Helical; Name=9" evidence="1">
    <location>
        <begin position="254"/>
        <end position="272"/>
    </location>
</feature>
<feature type="topological domain" description="Periplasmic" evidence="1">
    <location>
        <begin position="273"/>
        <end position="286"/>
    </location>
</feature>
<feature type="transmembrane region" description="Helical; Name=10" evidence="1">
    <location>
        <begin position="287"/>
        <end position="310"/>
    </location>
</feature>
<feature type="topological domain" description="Cytoplasmic" evidence="1">
    <location>
        <begin position="311"/>
        <end position="339"/>
    </location>
</feature>
<feature type="transmembrane region" description="Helical; Name=11" evidence="1">
    <location>
        <begin position="340"/>
        <end position="350"/>
    </location>
</feature>
<feature type="topological domain" description="Periplasmic" evidence="1">
    <location>
        <begin position="351"/>
        <end position="357"/>
    </location>
</feature>
<feature type="transmembrane region" description="Helical; Name=12" evidence="1">
    <location>
        <begin position="358"/>
        <end position="380"/>
    </location>
</feature>
<feature type="topological domain" description="Cytoplasmic" evidence="1">
    <location>
        <begin position="381"/>
        <end position="388"/>
    </location>
</feature>
<gene>
    <name evidence="1" type="primary">nhaA</name>
    <name type="ordered locus">EcHS_A0019</name>
</gene>
<protein>
    <recommendedName>
        <fullName evidence="1">Na(+)/H(+) antiporter NhaA</fullName>
    </recommendedName>
    <alternativeName>
        <fullName evidence="1">Sodium/proton antiporter NhaA</fullName>
    </alternativeName>
</protein>
<reference key="1">
    <citation type="journal article" date="2008" name="J. Bacteriol.">
        <title>The pangenome structure of Escherichia coli: comparative genomic analysis of E. coli commensal and pathogenic isolates.</title>
        <authorList>
            <person name="Rasko D.A."/>
            <person name="Rosovitz M.J."/>
            <person name="Myers G.S.A."/>
            <person name="Mongodin E.F."/>
            <person name="Fricke W.F."/>
            <person name="Gajer P."/>
            <person name="Crabtree J."/>
            <person name="Sebaihia M."/>
            <person name="Thomson N.R."/>
            <person name="Chaudhuri R."/>
            <person name="Henderson I.R."/>
            <person name="Sperandio V."/>
            <person name="Ravel J."/>
        </authorList>
    </citation>
    <scope>NUCLEOTIDE SEQUENCE [LARGE SCALE GENOMIC DNA]</scope>
    <source>
        <strain>HS</strain>
    </source>
</reference>
<organism>
    <name type="scientific">Escherichia coli O9:H4 (strain HS)</name>
    <dbReference type="NCBI Taxonomy" id="331112"/>
    <lineage>
        <taxon>Bacteria</taxon>
        <taxon>Pseudomonadati</taxon>
        <taxon>Pseudomonadota</taxon>
        <taxon>Gammaproteobacteria</taxon>
        <taxon>Enterobacterales</taxon>
        <taxon>Enterobacteriaceae</taxon>
        <taxon>Escherichia</taxon>
    </lineage>
</organism>
<comment type="function">
    <text evidence="1">Na(+)/H(+) antiporter that extrudes sodium in exchange for external protons.</text>
</comment>
<comment type="catalytic activity">
    <reaction evidence="1">
        <text>Na(+)(in) + 2 H(+)(out) = Na(+)(out) + 2 H(+)(in)</text>
        <dbReference type="Rhea" id="RHEA:29251"/>
        <dbReference type="ChEBI" id="CHEBI:15378"/>
        <dbReference type="ChEBI" id="CHEBI:29101"/>
    </reaction>
    <physiologicalReaction direction="left-to-right" evidence="1">
        <dbReference type="Rhea" id="RHEA:29252"/>
    </physiologicalReaction>
</comment>
<comment type="subcellular location">
    <subcellularLocation>
        <location evidence="1">Cell inner membrane</location>
        <topology evidence="1">Multi-pass membrane protein</topology>
    </subcellularLocation>
</comment>
<comment type="similarity">
    <text evidence="1">Belongs to the NhaA Na(+)/H(+) (TC 2.A.33) antiporter family.</text>
</comment>
<keyword id="KW-0050">Antiport</keyword>
<keyword id="KW-0997">Cell inner membrane</keyword>
<keyword id="KW-1003">Cell membrane</keyword>
<keyword id="KW-0406">Ion transport</keyword>
<keyword id="KW-0472">Membrane</keyword>
<keyword id="KW-0915">Sodium</keyword>
<keyword id="KW-0739">Sodium transport</keyword>
<keyword id="KW-0812">Transmembrane</keyword>
<keyword id="KW-1133">Transmembrane helix</keyword>
<keyword id="KW-0813">Transport</keyword>
<dbReference type="EMBL" id="CP000802">
    <property type="protein sequence ID" value="ABV04420.1"/>
    <property type="molecule type" value="Genomic_DNA"/>
</dbReference>
<dbReference type="RefSeq" id="WP_000681360.1">
    <property type="nucleotide sequence ID" value="NC_009800.1"/>
</dbReference>
<dbReference type="SMR" id="A7ZVW6"/>
<dbReference type="KEGG" id="ecx:EcHS_A0019"/>
<dbReference type="HOGENOM" id="CLU_015803_1_0_6"/>
<dbReference type="GO" id="GO:0005886">
    <property type="term" value="C:plasma membrane"/>
    <property type="evidence" value="ECO:0007669"/>
    <property type="project" value="UniProtKB-SubCell"/>
</dbReference>
<dbReference type="GO" id="GO:0015385">
    <property type="term" value="F:sodium:proton antiporter activity"/>
    <property type="evidence" value="ECO:0007669"/>
    <property type="project" value="TreeGrafter"/>
</dbReference>
<dbReference type="GO" id="GO:0006885">
    <property type="term" value="P:regulation of pH"/>
    <property type="evidence" value="ECO:0007669"/>
    <property type="project" value="InterPro"/>
</dbReference>
<dbReference type="FunFam" id="1.20.1530.10:FF:000001">
    <property type="entry name" value="Na(+)/H(+) antiporter NhaA"/>
    <property type="match status" value="1"/>
</dbReference>
<dbReference type="Gene3D" id="1.20.1530.10">
    <property type="entry name" value="Na+/H+ antiporter like domain"/>
    <property type="match status" value="1"/>
</dbReference>
<dbReference type="HAMAP" id="MF_01844">
    <property type="entry name" value="NhaA"/>
    <property type="match status" value="1"/>
</dbReference>
<dbReference type="InterPro" id="IPR023171">
    <property type="entry name" value="Na/H_antiporter_dom_sf"/>
</dbReference>
<dbReference type="InterPro" id="IPR004670">
    <property type="entry name" value="NhaA"/>
</dbReference>
<dbReference type="NCBIfam" id="TIGR00773">
    <property type="entry name" value="NhaA"/>
    <property type="match status" value="1"/>
</dbReference>
<dbReference type="NCBIfam" id="NF007111">
    <property type="entry name" value="PRK09560.1"/>
    <property type="match status" value="1"/>
</dbReference>
<dbReference type="NCBIfam" id="NF007112">
    <property type="entry name" value="PRK09561.1"/>
    <property type="match status" value="1"/>
</dbReference>
<dbReference type="PANTHER" id="PTHR30341:SF0">
    <property type="entry name" value="NA(+)_H(+) ANTIPORTER NHAA"/>
    <property type="match status" value="1"/>
</dbReference>
<dbReference type="PANTHER" id="PTHR30341">
    <property type="entry name" value="SODIUM ION/PROTON ANTIPORTER NHAA-RELATED"/>
    <property type="match status" value="1"/>
</dbReference>
<dbReference type="Pfam" id="PF06965">
    <property type="entry name" value="Na_H_antiport_1"/>
    <property type="match status" value="1"/>
</dbReference>
<sequence>MKHLHRFFSSDASGGIILIIAAILAMIMANSGATSGWYHDFLETPVQLRVGSLEINKNMLLWINDALMAVFFLLVGLEVKRELMQGSLASLRQAAFPVIAAIGGMIVPALLYLAFNYADPITREGWAIPAATDIAFALGVLALLGSRVPLALKIFLMALAIIDDLGAIIIIALFYTNDLSMASLGVAAVAIAVLAVLNLCGVRRTGVYILVGVVLWTAVLKSGVHATLAGVIVGFFIPLKEKHGRSPAKRLEHVLHPWVAYLILPLFAFANAGVSLQGVTLDGLTSILPLGIIAGLLIGKPLGISLFCWLALRLKLAHLPEGTTYQQIMAVGILCGIGFTMSIFIASLAFGSVDPELINWAKLGILVGSISSAVIGYSWLRVRLRPSV</sequence>